<reference key="1">
    <citation type="journal article" date="2005" name="Science">
        <title>The transcriptional landscape of the mammalian genome.</title>
        <authorList>
            <person name="Carninci P."/>
            <person name="Kasukawa T."/>
            <person name="Katayama S."/>
            <person name="Gough J."/>
            <person name="Frith M.C."/>
            <person name="Maeda N."/>
            <person name="Oyama R."/>
            <person name="Ravasi T."/>
            <person name="Lenhard B."/>
            <person name="Wells C."/>
            <person name="Kodzius R."/>
            <person name="Shimokawa K."/>
            <person name="Bajic V.B."/>
            <person name="Brenner S.E."/>
            <person name="Batalov S."/>
            <person name="Forrest A.R."/>
            <person name="Zavolan M."/>
            <person name="Davis M.J."/>
            <person name="Wilming L.G."/>
            <person name="Aidinis V."/>
            <person name="Allen J.E."/>
            <person name="Ambesi-Impiombato A."/>
            <person name="Apweiler R."/>
            <person name="Aturaliya R.N."/>
            <person name="Bailey T.L."/>
            <person name="Bansal M."/>
            <person name="Baxter L."/>
            <person name="Beisel K.W."/>
            <person name="Bersano T."/>
            <person name="Bono H."/>
            <person name="Chalk A.M."/>
            <person name="Chiu K.P."/>
            <person name="Choudhary V."/>
            <person name="Christoffels A."/>
            <person name="Clutterbuck D.R."/>
            <person name="Crowe M.L."/>
            <person name="Dalla E."/>
            <person name="Dalrymple B.P."/>
            <person name="de Bono B."/>
            <person name="Della Gatta G."/>
            <person name="di Bernardo D."/>
            <person name="Down T."/>
            <person name="Engstrom P."/>
            <person name="Fagiolini M."/>
            <person name="Faulkner G."/>
            <person name="Fletcher C.F."/>
            <person name="Fukushima T."/>
            <person name="Furuno M."/>
            <person name="Futaki S."/>
            <person name="Gariboldi M."/>
            <person name="Georgii-Hemming P."/>
            <person name="Gingeras T.R."/>
            <person name="Gojobori T."/>
            <person name="Green R.E."/>
            <person name="Gustincich S."/>
            <person name="Harbers M."/>
            <person name="Hayashi Y."/>
            <person name="Hensch T.K."/>
            <person name="Hirokawa N."/>
            <person name="Hill D."/>
            <person name="Huminiecki L."/>
            <person name="Iacono M."/>
            <person name="Ikeo K."/>
            <person name="Iwama A."/>
            <person name="Ishikawa T."/>
            <person name="Jakt M."/>
            <person name="Kanapin A."/>
            <person name="Katoh M."/>
            <person name="Kawasawa Y."/>
            <person name="Kelso J."/>
            <person name="Kitamura H."/>
            <person name="Kitano H."/>
            <person name="Kollias G."/>
            <person name="Krishnan S.P."/>
            <person name="Kruger A."/>
            <person name="Kummerfeld S.K."/>
            <person name="Kurochkin I.V."/>
            <person name="Lareau L.F."/>
            <person name="Lazarevic D."/>
            <person name="Lipovich L."/>
            <person name="Liu J."/>
            <person name="Liuni S."/>
            <person name="McWilliam S."/>
            <person name="Madan Babu M."/>
            <person name="Madera M."/>
            <person name="Marchionni L."/>
            <person name="Matsuda H."/>
            <person name="Matsuzawa S."/>
            <person name="Miki H."/>
            <person name="Mignone F."/>
            <person name="Miyake S."/>
            <person name="Morris K."/>
            <person name="Mottagui-Tabar S."/>
            <person name="Mulder N."/>
            <person name="Nakano N."/>
            <person name="Nakauchi H."/>
            <person name="Ng P."/>
            <person name="Nilsson R."/>
            <person name="Nishiguchi S."/>
            <person name="Nishikawa S."/>
            <person name="Nori F."/>
            <person name="Ohara O."/>
            <person name="Okazaki Y."/>
            <person name="Orlando V."/>
            <person name="Pang K.C."/>
            <person name="Pavan W.J."/>
            <person name="Pavesi G."/>
            <person name="Pesole G."/>
            <person name="Petrovsky N."/>
            <person name="Piazza S."/>
            <person name="Reed J."/>
            <person name="Reid J.F."/>
            <person name="Ring B.Z."/>
            <person name="Ringwald M."/>
            <person name="Rost B."/>
            <person name="Ruan Y."/>
            <person name="Salzberg S.L."/>
            <person name="Sandelin A."/>
            <person name="Schneider C."/>
            <person name="Schoenbach C."/>
            <person name="Sekiguchi K."/>
            <person name="Semple C.A."/>
            <person name="Seno S."/>
            <person name="Sessa L."/>
            <person name="Sheng Y."/>
            <person name="Shibata Y."/>
            <person name="Shimada H."/>
            <person name="Shimada K."/>
            <person name="Silva D."/>
            <person name="Sinclair B."/>
            <person name="Sperling S."/>
            <person name="Stupka E."/>
            <person name="Sugiura K."/>
            <person name="Sultana R."/>
            <person name="Takenaka Y."/>
            <person name="Taki K."/>
            <person name="Tammoja K."/>
            <person name="Tan S.L."/>
            <person name="Tang S."/>
            <person name="Taylor M.S."/>
            <person name="Tegner J."/>
            <person name="Teichmann S.A."/>
            <person name="Ueda H.R."/>
            <person name="van Nimwegen E."/>
            <person name="Verardo R."/>
            <person name="Wei C.L."/>
            <person name="Yagi K."/>
            <person name="Yamanishi H."/>
            <person name="Zabarovsky E."/>
            <person name="Zhu S."/>
            <person name="Zimmer A."/>
            <person name="Hide W."/>
            <person name="Bult C."/>
            <person name="Grimmond S.M."/>
            <person name="Teasdale R.D."/>
            <person name="Liu E.T."/>
            <person name="Brusic V."/>
            <person name="Quackenbush J."/>
            <person name="Wahlestedt C."/>
            <person name="Mattick J.S."/>
            <person name="Hume D.A."/>
            <person name="Kai C."/>
            <person name="Sasaki D."/>
            <person name="Tomaru Y."/>
            <person name="Fukuda S."/>
            <person name="Kanamori-Katayama M."/>
            <person name="Suzuki M."/>
            <person name="Aoki J."/>
            <person name="Arakawa T."/>
            <person name="Iida J."/>
            <person name="Imamura K."/>
            <person name="Itoh M."/>
            <person name="Kato T."/>
            <person name="Kawaji H."/>
            <person name="Kawagashira N."/>
            <person name="Kawashima T."/>
            <person name="Kojima M."/>
            <person name="Kondo S."/>
            <person name="Konno H."/>
            <person name="Nakano K."/>
            <person name="Ninomiya N."/>
            <person name="Nishio T."/>
            <person name="Okada M."/>
            <person name="Plessy C."/>
            <person name="Shibata K."/>
            <person name="Shiraki T."/>
            <person name="Suzuki S."/>
            <person name="Tagami M."/>
            <person name="Waki K."/>
            <person name="Watahiki A."/>
            <person name="Okamura-Oho Y."/>
            <person name="Suzuki H."/>
            <person name="Kawai J."/>
            <person name="Hayashizaki Y."/>
        </authorList>
    </citation>
    <scope>NUCLEOTIDE SEQUENCE [LARGE SCALE MRNA] (ISOFORM 1)</scope>
    <source>
        <strain>C57BL/6J</strain>
        <tissue>Embryo</tissue>
        <tissue>Kidney</tissue>
        <tissue>Thymus</tissue>
    </source>
</reference>
<reference key="2">
    <citation type="journal article" date="2004" name="Genome Res.">
        <title>The status, quality, and expansion of the NIH full-length cDNA project: the Mammalian Gene Collection (MGC).</title>
        <authorList>
            <consortium name="The MGC Project Team"/>
        </authorList>
    </citation>
    <scope>NUCLEOTIDE SEQUENCE [LARGE SCALE MRNA] (ISOFORMS 1 AND 2)</scope>
    <source>
        <strain>Czech II</strain>
        <strain>NMRI</strain>
        <tissue>Mammary tumor</tissue>
    </source>
</reference>
<reference key="3">
    <citation type="journal article" date="2011" name="Biochim. Biophys. Acta">
        <title>Rin-like, a novel regulator of endocytosis, acts as guanine nucleotide exchange factor for Rab5a and Rab22.</title>
        <authorList>
            <person name="Woller B."/>
            <person name="Luiskandl S."/>
            <person name="Popovic M."/>
            <person name="Prieler B.E."/>
            <person name="Ikonge G."/>
            <person name="Mutzl M."/>
            <person name="Rehmann H."/>
            <person name="Herbst R."/>
        </authorList>
    </citation>
    <scope>FUNCTION</scope>
    <scope>INTERACTION WITH RAB5A; RAB22A AND MUSK</scope>
    <scope>SUBCELLULAR LOCATION</scope>
    <scope>TISSUE SPECIFICITY</scope>
</reference>
<gene>
    <name type="primary">Rinl</name>
</gene>
<dbReference type="EMBL" id="AK030993">
    <property type="protein sequence ID" value="BAC27206.1"/>
    <property type="molecule type" value="mRNA"/>
</dbReference>
<dbReference type="EMBL" id="AK082828">
    <property type="protein sequence ID" value="BAC38641.1"/>
    <property type="status" value="ALT_INIT"/>
    <property type="molecule type" value="mRNA"/>
</dbReference>
<dbReference type="EMBL" id="AK162469">
    <property type="protein sequence ID" value="BAE36936.1"/>
    <property type="molecule type" value="mRNA"/>
</dbReference>
<dbReference type="EMBL" id="AK168472">
    <property type="protein sequence ID" value="BAE40363.1"/>
    <property type="status" value="ALT_INIT"/>
    <property type="molecule type" value="mRNA"/>
</dbReference>
<dbReference type="EMBL" id="BC044878">
    <property type="protein sequence ID" value="AAH44878.1"/>
    <property type="molecule type" value="mRNA"/>
</dbReference>
<dbReference type="EMBL" id="BC046530">
    <property type="protein sequence ID" value="AAH46530.1"/>
    <property type="molecule type" value="mRNA"/>
</dbReference>
<dbReference type="CCDS" id="CCDS21056.1">
    <molecule id="Q80UW3-1"/>
</dbReference>
<dbReference type="RefSeq" id="NP_001345845.1">
    <molecule id="Q80UW3-1"/>
    <property type="nucleotide sequence ID" value="NM_001358916.1"/>
</dbReference>
<dbReference type="RefSeq" id="NP_796132.2">
    <molecule id="Q80UW3-1"/>
    <property type="nucleotide sequence ID" value="NM_177158.5"/>
</dbReference>
<dbReference type="RefSeq" id="XP_006540162.1">
    <molecule id="Q80UW3-1"/>
    <property type="nucleotide sequence ID" value="XM_006540099.1"/>
</dbReference>
<dbReference type="SMR" id="Q80UW3"/>
<dbReference type="FunCoup" id="Q80UW3">
    <property type="interactions" value="61"/>
</dbReference>
<dbReference type="STRING" id="10090.ENSMUSP00000146576"/>
<dbReference type="GlyGen" id="Q80UW3">
    <property type="glycosylation" value="1 site"/>
</dbReference>
<dbReference type="iPTMnet" id="Q80UW3"/>
<dbReference type="PhosphoSitePlus" id="Q80UW3"/>
<dbReference type="PaxDb" id="10090-ENSMUSP00000058447"/>
<dbReference type="ProteomicsDB" id="255223">
    <molecule id="Q80UW3-1"/>
</dbReference>
<dbReference type="Antibodypedia" id="47998">
    <property type="antibodies" value="81 antibodies from 15 providers"/>
</dbReference>
<dbReference type="DNASU" id="320435"/>
<dbReference type="Ensembl" id="ENSMUST00000059857.8">
    <molecule id="Q80UW3-1"/>
    <property type="protein sequence ID" value="ENSMUSP00000058447.8"/>
    <property type="gene ID" value="ENSMUSG00000051735.8"/>
</dbReference>
<dbReference type="Ensembl" id="ENSMUST00000209035.2">
    <molecule id="Q80UW3-1"/>
    <property type="protein sequence ID" value="ENSMUSP00000146576.2"/>
    <property type="gene ID" value="ENSMUSG00000051735.8"/>
</dbReference>
<dbReference type="GeneID" id="320435"/>
<dbReference type="KEGG" id="mmu:320435"/>
<dbReference type="UCSC" id="uc009fzw.3">
    <molecule id="Q80UW3-1"/>
    <property type="organism name" value="mouse"/>
</dbReference>
<dbReference type="UCSC" id="uc009fzy.3">
    <molecule id="Q80UW3-2"/>
    <property type="organism name" value="mouse"/>
</dbReference>
<dbReference type="AGR" id="MGI:2444024"/>
<dbReference type="CTD" id="126432"/>
<dbReference type="MGI" id="MGI:2444024">
    <property type="gene designation" value="Rinl"/>
</dbReference>
<dbReference type="VEuPathDB" id="HostDB:ENSMUSG00000051735"/>
<dbReference type="eggNOG" id="KOG2320">
    <property type="taxonomic scope" value="Eukaryota"/>
</dbReference>
<dbReference type="GeneTree" id="ENSGT00940000162381"/>
<dbReference type="HOGENOM" id="CLU_038657_0_0_1"/>
<dbReference type="InParanoid" id="Q80UW3"/>
<dbReference type="OMA" id="RTWGVWH"/>
<dbReference type="OrthoDB" id="21085at2759"/>
<dbReference type="PhylomeDB" id="Q80UW3"/>
<dbReference type="TreeFam" id="TF331067"/>
<dbReference type="Reactome" id="R-MMU-8876198">
    <property type="pathway name" value="RAB GEFs exchange GTP for GDP on RABs"/>
</dbReference>
<dbReference type="BioGRID-ORCS" id="320435">
    <property type="hits" value="1 hit in 76 CRISPR screens"/>
</dbReference>
<dbReference type="PRO" id="PR:Q80UW3"/>
<dbReference type="Proteomes" id="UP000000589">
    <property type="component" value="Chromosome 7"/>
</dbReference>
<dbReference type="RNAct" id="Q80UW3">
    <property type="molecule type" value="protein"/>
</dbReference>
<dbReference type="Bgee" id="ENSMUSG00000051735">
    <property type="expression patterns" value="Expressed in granulocyte and 155 other cell types or tissues"/>
</dbReference>
<dbReference type="ExpressionAtlas" id="Q80UW3">
    <property type="expression patterns" value="baseline and differential"/>
</dbReference>
<dbReference type="GO" id="GO:0015629">
    <property type="term" value="C:actin cytoskeleton"/>
    <property type="evidence" value="ECO:0000314"/>
    <property type="project" value="MGI"/>
</dbReference>
<dbReference type="GO" id="GO:0031410">
    <property type="term" value="C:cytoplasmic vesicle"/>
    <property type="evidence" value="ECO:0007669"/>
    <property type="project" value="UniProtKB-KW"/>
</dbReference>
<dbReference type="GO" id="GO:0001726">
    <property type="term" value="C:ruffle"/>
    <property type="evidence" value="ECO:0000314"/>
    <property type="project" value="MGI"/>
</dbReference>
<dbReference type="GO" id="GO:0005096">
    <property type="term" value="F:GTPase activator activity"/>
    <property type="evidence" value="ECO:0007669"/>
    <property type="project" value="UniProtKB-KW"/>
</dbReference>
<dbReference type="GO" id="GO:0005085">
    <property type="term" value="F:guanyl-nucleotide exchange factor activity"/>
    <property type="evidence" value="ECO:0000314"/>
    <property type="project" value="MGI"/>
</dbReference>
<dbReference type="GO" id="GO:0006897">
    <property type="term" value="P:endocytosis"/>
    <property type="evidence" value="ECO:0000314"/>
    <property type="project" value="MGI"/>
</dbReference>
<dbReference type="GO" id="GO:0015031">
    <property type="term" value="P:protein transport"/>
    <property type="evidence" value="ECO:0007669"/>
    <property type="project" value="UniProtKB-KW"/>
</dbReference>
<dbReference type="FunFam" id="1.20.1050.80:FF:000012">
    <property type="entry name" value="Ras and Rab interactor like"/>
    <property type="match status" value="1"/>
</dbReference>
<dbReference type="Gene3D" id="1.20.1050.80">
    <property type="entry name" value="VPS9 domain"/>
    <property type="match status" value="1"/>
</dbReference>
<dbReference type="InterPro" id="IPR036860">
    <property type="entry name" value="SH2_dom_sf"/>
</dbReference>
<dbReference type="InterPro" id="IPR003123">
    <property type="entry name" value="VPS9"/>
</dbReference>
<dbReference type="InterPro" id="IPR045046">
    <property type="entry name" value="Vps9-like"/>
</dbReference>
<dbReference type="InterPro" id="IPR037191">
    <property type="entry name" value="VPS9_dom_sf"/>
</dbReference>
<dbReference type="PANTHER" id="PTHR23101">
    <property type="entry name" value="RAB GDP/GTP EXCHANGE FACTOR"/>
    <property type="match status" value="1"/>
</dbReference>
<dbReference type="PANTHER" id="PTHR23101:SF72">
    <property type="entry name" value="RAS AND RAB INTERACTOR-LIKE PROTEIN"/>
    <property type="match status" value="1"/>
</dbReference>
<dbReference type="Pfam" id="PF23268">
    <property type="entry name" value="RIN1"/>
    <property type="match status" value="1"/>
</dbReference>
<dbReference type="Pfam" id="PF02204">
    <property type="entry name" value="VPS9"/>
    <property type="match status" value="1"/>
</dbReference>
<dbReference type="SMART" id="SM00167">
    <property type="entry name" value="VPS9"/>
    <property type="match status" value="1"/>
</dbReference>
<dbReference type="SUPFAM" id="SSF55550">
    <property type="entry name" value="SH2 domain"/>
    <property type="match status" value="1"/>
</dbReference>
<dbReference type="SUPFAM" id="SSF109993">
    <property type="entry name" value="VPS9 domain"/>
    <property type="match status" value="1"/>
</dbReference>
<dbReference type="PROSITE" id="PS51205">
    <property type="entry name" value="VPS9"/>
    <property type="match status" value="1"/>
</dbReference>
<keyword id="KW-0025">Alternative splicing</keyword>
<keyword id="KW-0966">Cell projection</keyword>
<keyword id="KW-0968">Cytoplasmic vesicle</keyword>
<keyword id="KW-0254">Endocytosis</keyword>
<keyword id="KW-0343">GTPase activation</keyword>
<keyword id="KW-0653">Protein transport</keyword>
<keyword id="KW-1185">Reference proteome</keyword>
<keyword id="KW-0813">Transport</keyword>
<organism>
    <name type="scientific">Mus musculus</name>
    <name type="common">Mouse</name>
    <dbReference type="NCBI Taxonomy" id="10090"/>
    <lineage>
        <taxon>Eukaryota</taxon>
        <taxon>Metazoa</taxon>
        <taxon>Chordata</taxon>
        <taxon>Craniata</taxon>
        <taxon>Vertebrata</taxon>
        <taxon>Euteleostomi</taxon>
        <taxon>Mammalia</taxon>
        <taxon>Eutheria</taxon>
        <taxon>Euarchontoglires</taxon>
        <taxon>Glires</taxon>
        <taxon>Rodentia</taxon>
        <taxon>Myomorpha</taxon>
        <taxon>Muroidea</taxon>
        <taxon>Muridae</taxon>
        <taxon>Murinae</taxon>
        <taxon>Mus</taxon>
        <taxon>Mus</taxon>
    </lineage>
</organism>
<protein>
    <recommendedName>
        <fullName>Ras and Rab interactor-like protein</fullName>
    </recommendedName>
</protein>
<evidence type="ECO:0000255" key="1">
    <source>
        <dbReference type="PROSITE-ProRule" id="PRU00550"/>
    </source>
</evidence>
<evidence type="ECO:0000256" key="2">
    <source>
        <dbReference type="SAM" id="MobiDB-lite"/>
    </source>
</evidence>
<evidence type="ECO:0000269" key="3">
    <source>
    </source>
</evidence>
<evidence type="ECO:0000303" key="4">
    <source>
    </source>
</evidence>
<evidence type="ECO:0000305" key="5"/>
<feature type="chain" id="PRO_0000318974" description="Ras and Rab interactor-like protein">
    <location>
        <begin position="1"/>
        <end position="563"/>
    </location>
</feature>
<feature type="domain" description="VPS9" evidence="1">
    <location>
        <begin position="381"/>
        <end position="518"/>
    </location>
</feature>
<feature type="region of interest" description="Disordered" evidence="2">
    <location>
        <begin position="181"/>
        <end position="208"/>
    </location>
</feature>
<feature type="region of interest" description="Disordered" evidence="2">
    <location>
        <begin position="539"/>
        <end position="563"/>
    </location>
</feature>
<feature type="compositionally biased region" description="Low complexity" evidence="2">
    <location>
        <begin position="184"/>
        <end position="196"/>
    </location>
</feature>
<feature type="compositionally biased region" description="Low complexity" evidence="2">
    <location>
        <begin position="542"/>
        <end position="553"/>
    </location>
</feature>
<feature type="splice variant" id="VSP_031892" description="In isoform 2." evidence="4">
    <location>
        <begin position="1"/>
        <end position="442"/>
    </location>
</feature>
<feature type="splice variant" id="VSP_031893" description="In isoform 2." evidence="4">
    <original>GLGGGENK</original>
    <variation>MTRPLASL</variation>
    <location>
        <begin position="443"/>
        <end position="450"/>
    </location>
</feature>
<feature type="sequence conflict" description="In Ref. 1; BAC27206." evidence="5" ref="1">
    <original>H</original>
    <variation>R</variation>
    <location>
        <position position="535"/>
    </location>
</feature>
<proteinExistence type="evidence at protein level"/>
<sequence>MRLAQPDMVSAAPTEVDRLVWPLADGADKSPLGVLSTTEPLLRLQRTQRVWEVPELDAQYAKAFLELWPLGSFLVIGHEPGQVLMLKAGPSSGDINTYQIQRFPGGVSLESSNLCMPDCPHLLAFLSASRDVLPRTLLLPTPTVGAGDNHSDPHRLGCIQVDTSGRVLSVVNQLYLETHGGWGTETPQQTEPETGQKYSLAPRKPTPHRVSWVEDPLRPEAHHTGQEVHHPGADAHSLGSEVHFSCPALEEEEVNNDCYKDEDEEGCEDMLTAHIRALARTRSSYVARQYRCLRARLISDSGNPYSPGDPATELLQDVRQLLTDLQNYLAKDPDVRAVFGNRGPSILREEDLGPAVEVALCRAVLEPLKPALWTKLRTLRAQELRRLRRRQIALRVGAGPEGQSPALRNRNRIHARLAHLHAACAPRRKVALLLAVCSDVYAGLGGGENKEPLGADAFLPALTEELIWSPHIGETQLDVEFLMELLDPGELRGEAGYYLTTWFGALYHIAHYQPDTGRAPQGLSSEARASLRQWHRRRTLHQQAQPTAQANQPFEEPWAIGDP</sequence>
<accession>Q80UW3</accession>
<accession>Q3TRU0</accession>
<accession>Q811H9</accession>
<accession>Q8BUR6</accession>
<accession>Q8C0J1</accession>
<comment type="function">
    <text evidence="3">Guanine nucleotide exchange factor (GEF) for RAB5A and RAB22A that activates RAB5A and RAB22A by exchanging bound GDP for free GTP. Plays a role in endocytosis via its role in activating Rab family members.</text>
</comment>
<comment type="subunit">
    <text evidence="3">Interacts with RAB5A, RAB22A and MUSK.</text>
</comment>
<comment type="subcellular location">
    <subcellularLocation>
        <location evidence="3">Cell projection</location>
        <location evidence="3">Ruffle</location>
    </subcellularLocation>
    <subcellularLocation>
        <location evidence="3">Cytoplasmic vesicle</location>
    </subcellularLocation>
</comment>
<comment type="alternative products">
    <event type="alternative splicing"/>
    <isoform>
        <id>Q80UW3-1</id>
        <name>1</name>
        <sequence type="displayed"/>
    </isoform>
    <isoform>
        <id>Q80UW3-2</id>
        <name>2</name>
        <sequence type="described" ref="VSP_031892 VSP_031893"/>
    </isoform>
</comment>
<comment type="tissue specificity">
    <text evidence="3">Detected in thymus and spleen (at protein level). Detected in lung, liver, kidney, spleen, thymus and skeletal muscle.</text>
</comment>
<comment type="sequence caution" evidence="5">
    <conflict type="erroneous initiation">
        <sequence resource="EMBL-CDS" id="BAC38641"/>
    </conflict>
    <text>Truncated N-terminus.</text>
</comment>
<comment type="sequence caution" evidence="5">
    <conflict type="erroneous initiation">
        <sequence resource="EMBL-CDS" id="BAE40363"/>
    </conflict>
    <text>Truncated N-terminus.</text>
</comment>
<name>RINL_MOUSE</name>